<comment type="function">
    <text evidence="1">Core subunit of the mitochondrial membrane respiratory chain NADH dehydrogenase (Complex I) that is believed to belong to the minimal assembly required for catalysis. Complex I functions in the transfer of electrons from NADH to the respiratory chain. The immediate electron acceptor for the enzyme is believed to be ubiquinone (By similarity).</text>
</comment>
<comment type="catalytic activity">
    <reaction>
        <text>a ubiquinone + NADH + 5 H(+)(in) = a ubiquinol + NAD(+) + 4 H(+)(out)</text>
        <dbReference type="Rhea" id="RHEA:29091"/>
        <dbReference type="Rhea" id="RHEA-COMP:9565"/>
        <dbReference type="Rhea" id="RHEA-COMP:9566"/>
        <dbReference type="ChEBI" id="CHEBI:15378"/>
        <dbReference type="ChEBI" id="CHEBI:16389"/>
        <dbReference type="ChEBI" id="CHEBI:17976"/>
        <dbReference type="ChEBI" id="CHEBI:57540"/>
        <dbReference type="ChEBI" id="CHEBI:57945"/>
        <dbReference type="EC" id="7.1.1.2"/>
    </reaction>
</comment>
<comment type="subcellular location">
    <subcellularLocation>
        <location evidence="1">Mitochondrion inner membrane</location>
        <topology evidence="1">Multi-pass membrane protein</topology>
    </subcellularLocation>
</comment>
<comment type="similarity">
    <text evidence="3">Belongs to the complex I subunit 5 family.</text>
</comment>
<feature type="chain" id="PRO_0000118154" description="NADH-ubiquinone oxidoreductase chain 5">
    <location>
        <begin position="1"/>
        <end position="637"/>
    </location>
</feature>
<feature type="transmembrane region" description="Helical" evidence="2">
    <location>
        <begin position="7"/>
        <end position="27"/>
    </location>
</feature>
<feature type="transmembrane region" description="Helical" evidence="2">
    <location>
        <begin position="64"/>
        <end position="84"/>
    </location>
</feature>
<feature type="transmembrane region" description="Helical" evidence="2">
    <location>
        <begin position="117"/>
        <end position="137"/>
    </location>
</feature>
<feature type="transmembrane region" description="Helical" evidence="2">
    <location>
        <begin position="146"/>
        <end position="166"/>
    </location>
</feature>
<feature type="transmembrane region" description="Helical" evidence="2">
    <location>
        <begin position="169"/>
        <end position="189"/>
    </location>
</feature>
<feature type="transmembrane region" description="Helical" evidence="2">
    <location>
        <begin position="203"/>
        <end position="223"/>
    </location>
</feature>
<feature type="transmembrane region" description="Helical" evidence="2">
    <location>
        <begin position="240"/>
        <end position="260"/>
    </location>
</feature>
<feature type="transmembrane region" description="Helical" evidence="2">
    <location>
        <begin position="276"/>
        <end position="296"/>
    </location>
</feature>
<feature type="transmembrane region" description="Helical" evidence="2">
    <location>
        <begin position="309"/>
        <end position="329"/>
    </location>
</feature>
<feature type="transmembrane region" description="Helical" evidence="2">
    <location>
        <begin position="345"/>
        <end position="365"/>
    </location>
</feature>
<feature type="transmembrane region" description="Helical" evidence="2">
    <location>
        <begin position="403"/>
        <end position="423"/>
    </location>
</feature>
<feature type="transmembrane region" description="Helical" evidence="2">
    <location>
        <begin position="435"/>
        <end position="455"/>
    </location>
</feature>
<feature type="transmembrane region" description="Helical" evidence="2">
    <location>
        <begin position="492"/>
        <end position="512"/>
    </location>
</feature>
<feature type="transmembrane region" description="Helical" evidence="2">
    <location>
        <begin position="520"/>
        <end position="540"/>
    </location>
</feature>
<feature type="transmembrane region" description="Helical" evidence="2">
    <location>
        <begin position="557"/>
        <end position="577"/>
    </location>
</feature>
<feature type="transmembrane region" description="Helical" evidence="2">
    <location>
        <begin position="617"/>
        <end position="637"/>
    </location>
</feature>
<feature type="sequence conflict" description="In Ref. 2; AAA32083." evidence="3" ref="2">
    <original>V</original>
    <variation>A</variation>
    <location>
        <position position="73"/>
    </location>
</feature>
<feature type="sequence conflict" description="In Ref. 2; AAA32083." evidence="3" ref="2">
    <original>CNNSIQS</original>
    <variation>VNTGFSE</variation>
    <location>
        <begin position="86"/>
        <end position="92"/>
    </location>
</feature>
<gene>
    <name type="primary">ND5</name>
</gene>
<evidence type="ECO:0000250" key="1"/>
<evidence type="ECO:0000255" key="2"/>
<evidence type="ECO:0000305" key="3"/>
<reference key="1">
    <citation type="journal article" date="1988" name="J. Mol. Biol.">
        <title>Nucleotide sequence and gene organization of sea urchin mitochondrial DNA.</title>
        <authorList>
            <person name="Jacobs H.T."/>
            <person name="Elliott D.J."/>
            <person name="Math V.B."/>
            <person name="Farquharson A."/>
        </authorList>
    </citation>
    <scope>NUCLEOTIDE SEQUENCE [GENOMIC DNA]</scope>
</reference>
<reference key="2">
    <citation type="journal article" date="1989" name="New Biol.">
        <title>Shifting constraints on tRNA genes during mitochondrial DNA evolution in animals.</title>
        <authorList>
            <person name="Thomas W.K."/>
            <person name="Maa J."/>
            <person name="Wilson A.C."/>
        </authorList>
    </citation>
    <scope>NUCLEOTIDE SEQUENCE [GENOMIC DNA] OF 1-131</scope>
</reference>
<accession>P15552</accession>
<accession>Q35902</accession>
<organism>
    <name type="scientific">Strongylocentrotus purpuratus</name>
    <name type="common">Purple sea urchin</name>
    <dbReference type="NCBI Taxonomy" id="7668"/>
    <lineage>
        <taxon>Eukaryota</taxon>
        <taxon>Metazoa</taxon>
        <taxon>Echinodermata</taxon>
        <taxon>Eleutherozoa</taxon>
        <taxon>Echinozoa</taxon>
        <taxon>Echinoidea</taxon>
        <taxon>Euechinoidea</taxon>
        <taxon>Echinacea</taxon>
        <taxon>Camarodonta</taxon>
        <taxon>Echinidea</taxon>
        <taxon>Strongylocentrotidae</taxon>
        <taxon>Strongylocentrotus</taxon>
    </lineage>
</organism>
<proteinExistence type="inferred from homology"/>
<sequence length="637" mass="68558">MVISPSLIISSLNLGILTILLGSIFFFSKSYFSKGNVNFPLIKTTSACLSVNNDKEETIEYNSGPFAMAILKVLAFLSVLSLLVTCNNSIQSINITLSLWLSNTPLNISLNFIYDQYFLVFLSVALIVTWSIMEFSFYYMTEDPNSSAFFRLLTIFLLNMLILTCSNSLFLIFLGWEGGGFLSFLLISWWTTRNDASSSALEAVITNRIGNIGLITFMALSALNFNSSNLTNILSSNENLTPLLPFLLFGLILAAAGKSAQFGLHPWLPALLEGPTPVSALLHSSTMVVAGVFLLVRTSELFSSPLITHSLVLILGGTTALFAASTAIAQHDIKKIIAYSTTSQLGLMVTAIGIGQPALAFFHICTHAFFKAMLFLCSGSVIHSLSDEQDLRKMGGLSKLLPVTSSCLILGSLALMAPLLAGFYSKDLILEATSASVLNLLGIVLSIVATMLTAVYSFRIIFFCFSLSPSCSSPFSHSEENFNLNNALLRLATGTIASGWFFSNLLFAPPSFNVTSLAKGTPLIVPIIGVAALFMSLISSTSNSIGSNAHSATTSQWFFVDAVHLSIITMSLALSFFSSRTLDRGWQENIGPQGIAPTSTALSKISQAGQIGLIKRYILSSMASVLVILALSLLILS</sequence>
<dbReference type="EC" id="7.1.1.2"/>
<dbReference type="EMBL" id="X12631">
    <property type="protein sequence ID" value="CAA31160.1"/>
    <property type="molecule type" value="Genomic_DNA"/>
</dbReference>
<dbReference type="EMBL" id="M27669">
    <property type="protein sequence ID" value="AAA32083.2"/>
    <property type="molecule type" value="Genomic_DNA"/>
</dbReference>
<dbReference type="PIR" id="S01509">
    <property type="entry name" value="S01509"/>
</dbReference>
<dbReference type="RefSeq" id="NP_006975.1">
    <property type="nucleotide sequence ID" value="NC_001453.1"/>
</dbReference>
<dbReference type="SMR" id="P15552"/>
<dbReference type="FunCoup" id="P15552">
    <property type="interactions" value="17"/>
</dbReference>
<dbReference type="STRING" id="7668.P15552"/>
<dbReference type="EnsemblMetazoa" id="GeneID_2652725_df_mr">
    <property type="protein sequence ID" value="NP_006975"/>
    <property type="gene ID" value="GeneID_2652725"/>
</dbReference>
<dbReference type="GeneID" id="2652725"/>
<dbReference type="KEGG" id="spu:2652725"/>
<dbReference type="CTD" id="4540"/>
<dbReference type="InParanoid" id="P15552"/>
<dbReference type="OMA" id="ISWWTTR"/>
<dbReference type="OrthoDB" id="10069788at2759"/>
<dbReference type="PhylomeDB" id="P15552"/>
<dbReference type="Proteomes" id="UP000007110">
    <property type="component" value="Unassembled WGS sequence"/>
</dbReference>
<dbReference type="GO" id="GO:0005743">
    <property type="term" value="C:mitochondrial inner membrane"/>
    <property type="evidence" value="ECO:0007669"/>
    <property type="project" value="UniProtKB-SubCell"/>
</dbReference>
<dbReference type="GO" id="GO:0045271">
    <property type="term" value="C:respiratory chain complex I"/>
    <property type="evidence" value="ECO:0000318"/>
    <property type="project" value="GO_Central"/>
</dbReference>
<dbReference type="GO" id="GO:0008137">
    <property type="term" value="F:NADH dehydrogenase (ubiquinone) activity"/>
    <property type="evidence" value="ECO:0007669"/>
    <property type="project" value="UniProtKB-EC"/>
</dbReference>
<dbReference type="GO" id="GO:0042773">
    <property type="term" value="P:ATP synthesis coupled electron transport"/>
    <property type="evidence" value="ECO:0007669"/>
    <property type="project" value="InterPro"/>
</dbReference>
<dbReference type="GO" id="GO:0015990">
    <property type="term" value="P:electron transport coupled proton transport"/>
    <property type="evidence" value="ECO:0000318"/>
    <property type="project" value="GO_Central"/>
</dbReference>
<dbReference type="InterPro" id="IPR010934">
    <property type="entry name" value="NADH_DH_su5_C"/>
</dbReference>
<dbReference type="InterPro" id="IPR018393">
    <property type="entry name" value="NADHpl_OxRdtase_5_subgr"/>
</dbReference>
<dbReference type="InterPro" id="IPR001750">
    <property type="entry name" value="ND/Mrp_TM"/>
</dbReference>
<dbReference type="InterPro" id="IPR003945">
    <property type="entry name" value="NU5C-like"/>
</dbReference>
<dbReference type="InterPro" id="IPR001516">
    <property type="entry name" value="Proton_antipo_N"/>
</dbReference>
<dbReference type="NCBIfam" id="TIGR01974">
    <property type="entry name" value="NDH_I_L"/>
    <property type="match status" value="1"/>
</dbReference>
<dbReference type="PANTHER" id="PTHR42829">
    <property type="entry name" value="NADH-UBIQUINONE OXIDOREDUCTASE CHAIN 5"/>
    <property type="match status" value="1"/>
</dbReference>
<dbReference type="PANTHER" id="PTHR42829:SF2">
    <property type="entry name" value="NADH-UBIQUINONE OXIDOREDUCTASE CHAIN 5"/>
    <property type="match status" value="1"/>
</dbReference>
<dbReference type="Pfam" id="PF06455">
    <property type="entry name" value="NADH5_C"/>
    <property type="match status" value="1"/>
</dbReference>
<dbReference type="Pfam" id="PF00361">
    <property type="entry name" value="Proton_antipo_M"/>
    <property type="match status" value="1"/>
</dbReference>
<dbReference type="Pfam" id="PF00662">
    <property type="entry name" value="Proton_antipo_N"/>
    <property type="match status" value="1"/>
</dbReference>
<dbReference type="PRINTS" id="PR01434">
    <property type="entry name" value="NADHDHGNASE5"/>
</dbReference>
<name>NU5M_STRPU</name>
<protein>
    <recommendedName>
        <fullName>NADH-ubiquinone oxidoreductase chain 5</fullName>
        <ecNumber>7.1.1.2</ecNumber>
    </recommendedName>
    <alternativeName>
        <fullName>NADH dehydrogenase subunit 5</fullName>
    </alternativeName>
</protein>
<keyword id="KW-0249">Electron transport</keyword>
<keyword id="KW-0472">Membrane</keyword>
<keyword id="KW-0496">Mitochondrion</keyword>
<keyword id="KW-0999">Mitochondrion inner membrane</keyword>
<keyword id="KW-0520">NAD</keyword>
<keyword id="KW-1185">Reference proteome</keyword>
<keyword id="KW-0679">Respiratory chain</keyword>
<keyword id="KW-1278">Translocase</keyword>
<keyword id="KW-0812">Transmembrane</keyword>
<keyword id="KW-1133">Transmembrane helix</keyword>
<keyword id="KW-0813">Transport</keyword>
<keyword id="KW-0830">Ubiquinone</keyword>
<geneLocation type="mitochondrion"/>